<evidence type="ECO:0000269" key="1">
    <source>
    </source>
</evidence>
<evidence type="ECO:0000269" key="2">
    <source>
    </source>
</evidence>
<evidence type="ECO:0000269" key="3">
    <source>
    </source>
</evidence>
<evidence type="ECO:0000269" key="4">
    <source ref="5"/>
</evidence>
<evidence type="ECO:0000305" key="5"/>
<evidence type="ECO:0000305" key="6">
    <source>
    </source>
</evidence>
<evidence type="ECO:0007744" key="7">
    <source>
        <dbReference type="PDB" id="7TAA"/>
    </source>
</evidence>
<evidence type="ECO:0007829" key="8">
    <source>
        <dbReference type="PDB" id="2TAA"/>
    </source>
</evidence>
<evidence type="ECO:0007829" key="9">
    <source>
        <dbReference type="PDB" id="3KWX"/>
    </source>
</evidence>
<evidence type="ECO:0007829" key="10">
    <source>
        <dbReference type="PDB" id="3VX0"/>
    </source>
</evidence>
<evidence type="ECO:0007829" key="11">
    <source>
        <dbReference type="PDB" id="6TAA"/>
    </source>
</evidence>
<evidence type="ECO:0007829" key="12">
    <source>
        <dbReference type="PDB" id="6XSJ"/>
    </source>
</evidence>
<evidence type="ECO:0007829" key="13">
    <source>
        <dbReference type="PDB" id="6YQ7"/>
    </source>
</evidence>
<feature type="signal peptide" evidence="4">
    <location>
        <begin position="1"/>
        <end position="21"/>
    </location>
</feature>
<feature type="chain" id="PRO_0000001349" description="Alpha-amylase A type-1/2">
    <location>
        <begin position="22"/>
        <end position="499"/>
    </location>
</feature>
<feature type="active site" description="Nucleophile" evidence="6">
    <location>
        <position position="227"/>
    </location>
</feature>
<feature type="active site" description="Proton donor" evidence="6">
    <location>
        <position position="251"/>
    </location>
</feature>
<feature type="binding site" evidence="6">
    <location>
        <position position="56"/>
    </location>
    <ligand>
        <name>substrate</name>
    </ligand>
</feature>
<feature type="binding site" evidence="6">
    <location>
        <position position="104"/>
    </location>
    <ligand>
        <name>substrate</name>
    </ligand>
</feature>
<feature type="binding site" evidence="1 2 3">
    <location>
        <position position="142"/>
    </location>
    <ligand>
        <name>Ca(2+)</name>
        <dbReference type="ChEBI" id="CHEBI:29108"/>
        <label>1</label>
    </ligand>
</feature>
<feature type="binding site" evidence="6">
    <location>
        <position position="143"/>
    </location>
    <ligand>
        <name>substrate</name>
    </ligand>
</feature>
<feature type="binding site" evidence="1 2 3">
    <location>
        <position position="183"/>
    </location>
    <ligand>
        <name>Ca(2+)</name>
        <dbReference type="ChEBI" id="CHEBI:29108"/>
        <label>1</label>
    </ligand>
</feature>
<feature type="binding site" evidence="1 2 3">
    <location>
        <position position="196"/>
    </location>
    <ligand>
        <name>Ca(2+)</name>
        <dbReference type="ChEBI" id="CHEBI:29108"/>
        <label>1</label>
    </ligand>
</feature>
<feature type="binding site" evidence="6">
    <location>
        <position position="225"/>
    </location>
    <ligand>
        <name>substrate</name>
    </ligand>
</feature>
<feature type="binding site" evidence="3">
    <location>
        <position position="227"/>
    </location>
    <ligand>
        <name>Ca(2+)</name>
        <dbReference type="ChEBI" id="CHEBI:29108"/>
        <label>2</label>
    </ligand>
</feature>
<feature type="binding site" evidence="6">
    <location>
        <begin position="230"/>
        <end position="231"/>
    </location>
    <ligand>
        <name>substrate</name>
    </ligand>
</feature>
<feature type="binding site" evidence="1 2 3">
    <location>
        <position position="231"/>
    </location>
    <ligand>
        <name>Ca(2+)</name>
        <dbReference type="ChEBI" id="CHEBI:29108"/>
        <label>1</label>
    </ligand>
</feature>
<feature type="binding site" evidence="3">
    <location>
        <position position="251"/>
    </location>
    <ligand>
        <name>Ca(2+)</name>
        <dbReference type="ChEBI" id="CHEBI:29108"/>
        <label>2</label>
    </ligand>
</feature>
<feature type="binding site" evidence="6">
    <location>
        <position position="255"/>
    </location>
    <ligand>
        <name>substrate</name>
    </ligand>
</feature>
<feature type="binding site" evidence="6">
    <location>
        <position position="318"/>
    </location>
    <ligand>
        <name>substrate</name>
    </ligand>
</feature>
<feature type="binding site" evidence="6">
    <location>
        <position position="365"/>
    </location>
    <ligand>
        <name>substrate</name>
    </ligand>
</feature>
<feature type="site" description="Transition state stabilizer" evidence="6">
    <location>
        <position position="318"/>
    </location>
</feature>
<feature type="glycosylation site" id="CAR_000125" description="N-linked (GlcNAc...) asparagine" evidence="1">
    <location>
        <position position="218"/>
    </location>
</feature>
<feature type="disulfide bond" evidence="1 2 3 7">
    <location>
        <begin position="51"/>
        <end position="59"/>
    </location>
</feature>
<feature type="disulfide bond" evidence="1 2 3 7">
    <location>
        <begin position="171"/>
        <end position="185"/>
    </location>
</feature>
<feature type="disulfide bond" evidence="1 2 3 7">
    <location>
        <begin position="261"/>
        <end position="304"/>
    </location>
</feature>
<feature type="disulfide bond" evidence="1 2 3 7">
    <location>
        <begin position="461"/>
        <end position="496"/>
    </location>
</feature>
<feature type="sequence conflict" description="In Ref. 5; AA sequence." evidence="5" ref="5">
    <original>TT</original>
    <variation>DC</variation>
    <location>
        <begin position="93"/>
        <end position="94"/>
    </location>
</feature>
<feature type="sequence conflict" description="In Ref. 5; AA sequence." evidence="5" ref="5">
    <original>H</original>
    <variation>T</variation>
    <location>
        <position position="101"/>
    </location>
</feature>
<feature type="sequence conflict" description="In Ref. 5; AA sequence." evidence="5" ref="5">
    <original>Q</original>
    <variation>T</variation>
    <location>
        <position position="106"/>
    </location>
</feature>
<feature type="sequence conflict" description="In Ref. 3; BAA00336." evidence="5" ref="3">
    <original>D</original>
    <variation>Y</variation>
    <location>
        <position position="184"/>
    </location>
</feature>
<feature type="sequence conflict" description="In Ref. 3; BAA00336." evidence="5" ref="3">
    <original>P</original>
    <variation>L</variation>
    <location>
        <position position="195"/>
    </location>
</feature>
<feature type="sequence conflict" description="In Ref. 3; BAA00336." evidence="5" ref="3">
    <original>G</original>
    <variation>V</variation>
    <location>
        <position position="255"/>
    </location>
</feature>
<feature type="sequence conflict" description="In Ref. 5; AA sequence." evidence="5" ref="5">
    <original>I</original>
    <variation>L</variation>
    <location>
        <position position="345"/>
    </location>
</feature>
<feature type="sequence conflict" description="In Ref. 5; AA sequence." evidence="5" ref="5">
    <original>WPIY</original>
    <variation>PYI</variation>
    <location>
        <begin position="406"/>
        <end position="409"/>
    </location>
</feature>
<feature type="sequence conflict" description="In Ref. 7; AA sequence." evidence="5" ref="7">
    <location>
        <begin position="443"/>
        <end position="444"/>
    </location>
</feature>
<feature type="sequence conflict" description="In Ref. 7; AA sequence." evidence="5" ref="7">
    <original>G</original>
    <variation>Q</variation>
    <location>
        <position position="448"/>
    </location>
</feature>
<feature type="sequence conflict" description="In Ref. 5; AA sequence." evidence="5" ref="5">
    <original>G</original>
    <variation>S</variation>
    <location>
        <position position="448"/>
    </location>
</feature>
<feature type="sequence conflict" description="In Ref. 7; AA sequence." evidence="5" ref="7">
    <original>V</original>
    <variation>VGTTV</variation>
    <location>
        <position position="458"/>
    </location>
</feature>
<feature type="sequence conflict" description="In Ref. 7; AA sequence." evidence="5" ref="7">
    <location>
        <begin position="465"/>
        <end position="466"/>
    </location>
</feature>
<feature type="sequence conflict" description="In Ref. 7; AA sequence." evidence="5" ref="7">
    <original>DGN</original>
    <variation>BGB</variation>
    <location>
        <begin position="469"/>
        <end position="471"/>
    </location>
</feature>
<feature type="sequence conflict" description="In Ref. 5; AA sequence." evidence="5" ref="5">
    <original>S</original>
    <variation>SD</variation>
    <location>
        <position position="497"/>
    </location>
</feature>
<feature type="helix" evidence="12">
    <location>
        <begin position="24"/>
        <end position="27"/>
    </location>
</feature>
<feature type="strand" evidence="12">
    <location>
        <begin position="32"/>
        <end position="35"/>
    </location>
</feature>
<feature type="helix" evidence="12">
    <location>
        <begin position="37"/>
        <end position="40"/>
    </location>
</feature>
<feature type="strand" evidence="13">
    <location>
        <begin position="47"/>
        <end position="49"/>
    </location>
</feature>
<feature type="helix" evidence="12">
    <location>
        <begin position="53"/>
        <end position="55"/>
    </location>
</feature>
<feature type="helix" evidence="12">
    <location>
        <begin position="63"/>
        <end position="68"/>
    </location>
</feature>
<feature type="helix" evidence="12">
    <location>
        <begin position="70"/>
        <end position="74"/>
    </location>
</feature>
<feature type="turn" evidence="12">
    <location>
        <begin position="75"/>
        <end position="77"/>
    </location>
</feature>
<feature type="strand" evidence="12">
    <location>
        <begin position="80"/>
        <end position="83"/>
    </location>
</feature>
<feature type="strand" evidence="12">
    <location>
        <begin position="87"/>
        <end position="89"/>
    </location>
</feature>
<feature type="strand" evidence="12">
    <location>
        <begin position="104"/>
        <end position="111"/>
    </location>
</feature>
<feature type="helix" evidence="12">
    <location>
        <begin position="113"/>
        <end position="115"/>
    </location>
</feature>
<feature type="helix" evidence="12">
    <location>
        <begin position="118"/>
        <end position="130"/>
    </location>
</feature>
<feature type="strand" evidence="12">
    <location>
        <begin position="134"/>
        <end position="139"/>
    </location>
</feature>
<feature type="strand" evidence="12">
    <location>
        <begin position="146"/>
        <end position="148"/>
    </location>
</feature>
<feature type="helix" evidence="12">
    <location>
        <begin position="150"/>
        <end position="152"/>
    </location>
</feature>
<feature type="helix" evidence="12">
    <location>
        <begin position="155"/>
        <end position="157"/>
    </location>
</feature>
<feature type="strand" evidence="12">
    <location>
        <begin position="158"/>
        <end position="160"/>
    </location>
</feature>
<feature type="helix" evidence="12">
    <location>
        <begin position="164"/>
        <end position="166"/>
    </location>
</feature>
<feature type="helix" evidence="8">
    <location>
        <begin position="176"/>
        <end position="178"/>
    </location>
</feature>
<feature type="helix" evidence="12">
    <location>
        <begin position="179"/>
        <end position="184"/>
    </location>
</feature>
<feature type="strand" evidence="12">
    <location>
        <begin position="185"/>
        <end position="188"/>
    </location>
</feature>
<feature type="strand" evidence="12">
    <location>
        <begin position="190"/>
        <end position="194"/>
    </location>
</feature>
<feature type="helix" evidence="12">
    <location>
        <begin position="202"/>
        <end position="219"/>
    </location>
</feature>
<feature type="strand" evidence="12">
    <location>
        <begin position="223"/>
        <end position="227"/>
    </location>
</feature>
<feature type="helix" evidence="12">
    <location>
        <begin position="229"/>
        <end position="231"/>
    </location>
</feature>
<feature type="helix" evidence="12">
    <location>
        <begin position="234"/>
        <end position="236"/>
    </location>
</feature>
<feature type="helix" evidence="12">
    <location>
        <begin position="237"/>
        <end position="244"/>
    </location>
</feature>
<feature type="strand" evidence="12">
    <location>
        <begin position="246"/>
        <end position="250"/>
    </location>
</feature>
<feature type="helix" evidence="12">
    <location>
        <begin position="257"/>
        <end position="260"/>
    </location>
</feature>
<feature type="helix" evidence="12">
    <location>
        <begin position="261"/>
        <end position="265"/>
    </location>
</feature>
<feature type="strand" evidence="12">
    <location>
        <begin position="267"/>
        <end position="271"/>
    </location>
</feature>
<feature type="helix" evidence="12">
    <location>
        <begin position="273"/>
        <end position="283"/>
    </location>
</feature>
<feature type="helix" evidence="12">
    <location>
        <begin position="290"/>
        <end position="303"/>
    </location>
</feature>
<feature type="helix" evidence="12">
    <location>
        <begin position="307"/>
        <end position="309"/>
    </location>
</feature>
<feature type="strand" evidence="12">
    <location>
        <begin position="310"/>
        <end position="312"/>
    </location>
</feature>
<feature type="helix" evidence="12">
    <location>
        <begin position="322"/>
        <end position="325"/>
    </location>
</feature>
<feature type="helix" evidence="12">
    <location>
        <begin position="329"/>
        <end position="341"/>
    </location>
</feature>
<feature type="strand" evidence="12">
    <location>
        <begin position="342"/>
        <end position="349"/>
    </location>
</feature>
<feature type="helix" evidence="12">
    <location>
        <begin position="352"/>
        <end position="354"/>
    </location>
</feature>
<feature type="turn" evidence="12">
    <location>
        <begin position="361"/>
        <end position="364"/>
    </location>
</feature>
<feature type="helix" evidence="12">
    <location>
        <begin position="368"/>
        <end position="371"/>
    </location>
</feature>
<feature type="strand" evidence="13">
    <location>
        <begin position="375"/>
        <end position="377"/>
    </location>
</feature>
<feature type="helix" evidence="12">
    <location>
        <begin position="378"/>
        <end position="396"/>
    </location>
</feature>
<feature type="helix" evidence="12">
    <location>
        <begin position="400"/>
        <end position="402"/>
    </location>
</feature>
<feature type="strand" evidence="12">
    <location>
        <begin position="406"/>
        <end position="411"/>
    </location>
</feature>
<feature type="strand" evidence="12">
    <location>
        <begin position="414"/>
        <end position="421"/>
    </location>
</feature>
<feature type="turn" evidence="10">
    <location>
        <begin position="422"/>
        <end position="424"/>
    </location>
</feature>
<feature type="strand" evidence="12">
    <location>
        <begin position="426"/>
        <end position="431"/>
    </location>
</feature>
<feature type="strand" evidence="12">
    <location>
        <begin position="440"/>
        <end position="444"/>
    </location>
</feature>
<feature type="strand" evidence="12">
    <location>
        <begin position="454"/>
        <end position="457"/>
    </location>
</feature>
<feature type="turn" evidence="12">
    <location>
        <begin position="458"/>
        <end position="461"/>
    </location>
</feature>
<feature type="strand" evidence="12">
    <location>
        <begin position="462"/>
        <end position="465"/>
    </location>
</feature>
<feature type="strand" evidence="11">
    <location>
        <begin position="468"/>
        <end position="470"/>
    </location>
</feature>
<feature type="strand" evidence="12">
    <location>
        <begin position="472"/>
        <end position="476"/>
    </location>
</feature>
<feature type="strand" evidence="12">
    <location>
        <begin position="482"/>
        <end position="486"/>
    </location>
</feature>
<feature type="helix" evidence="12">
    <location>
        <begin position="487"/>
        <end position="490"/>
    </location>
</feature>
<feature type="strand" evidence="9">
    <location>
        <begin position="493"/>
        <end position="495"/>
    </location>
</feature>
<reference key="1">
    <citation type="journal article" date="1989" name="Mol. Microbiol.">
        <title>Three alpha-amylase genes of Aspergillus oryzae exhibit identical intron-exon organization.</title>
        <authorList>
            <person name="Wirsel S."/>
            <person name="Lachmund A."/>
            <person name="Wildhardt G."/>
            <person name="Ruttkowski E."/>
        </authorList>
    </citation>
    <scope>NUCLEOTIDE SEQUENCE [GENOMIC DNA] (AMY1 AND AMY2)</scope>
    <source>
        <strain>DSM 63303</strain>
    </source>
</reference>
<reference key="2">
    <citation type="journal article" date="1989" name="Gene">
        <title>Aspergillus oryzae has two nearly identical Taka-amylase genes, each containing eight introns.</title>
        <authorList>
            <person name="Genes M.J."/>
            <person name="Dove M.J."/>
            <person name="Seligy V.L."/>
        </authorList>
    </citation>
    <scope>NUCLEOTIDE SEQUENCE [GENOMIC DNA]</scope>
</reference>
<reference key="3">
    <citation type="journal article" date="1989" name="Agric. Biol. Chem.">
        <title>Cloning and nucleotide sequence of the genomic Taka-amylase A gene of Aspergillus oryzae.</title>
        <authorList>
            <person name="Tada S."/>
            <person name="Iimura Y."/>
            <person name="Gomi K."/>
            <person name="Takahashi K."/>
            <person name="Hara S."/>
            <person name="Yoshizawa K."/>
        </authorList>
    </citation>
    <scope>NUCLEOTIDE SEQUENCE [GENOMIC DNA]</scope>
</reference>
<reference key="4">
    <citation type="journal article" date="2005" name="Nature">
        <title>Genome sequencing and analysis of Aspergillus oryzae.</title>
        <authorList>
            <person name="Machida M."/>
            <person name="Asai K."/>
            <person name="Sano M."/>
            <person name="Tanaka T."/>
            <person name="Kumagai T."/>
            <person name="Terai G."/>
            <person name="Kusumoto K."/>
            <person name="Arima T."/>
            <person name="Akita O."/>
            <person name="Kashiwagi Y."/>
            <person name="Abe K."/>
            <person name="Gomi K."/>
            <person name="Horiuchi H."/>
            <person name="Kitamoto K."/>
            <person name="Kobayashi T."/>
            <person name="Takeuchi M."/>
            <person name="Denning D.W."/>
            <person name="Galagan J.E."/>
            <person name="Nierman W.C."/>
            <person name="Yu J."/>
            <person name="Archer D.B."/>
            <person name="Bennett J.W."/>
            <person name="Bhatnagar D."/>
            <person name="Cleveland T.E."/>
            <person name="Fedorova N.D."/>
            <person name="Gotoh O."/>
            <person name="Horikawa H."/>
            <person name="Hosoyama A."/>
            <person name="Ichinomiya M."/>
            <person name="Igarashi R."/>
            <person name="Iwashita K."/>
            <person name="Juvvadi P.R."/>
            <person name="Kato M."/>
            <person name="Kato Y."/>
            <person name="Kin T."/>
            <person name="Kokubun A."/>
            <person name="Maeda H."/>
            <person name="Maeyama N."/>
            <person name="Maruyama J."/>
            <person name="Nagasaki H."/>
            <person name="Nakajima T."/>
            <person name="Oda K."/>
            <person name="Okada K."/>
            <person name="Paulsen I."/>
            <person name="Sakamoto K."/>
            <person name="Sawano T."/>
            <person name="Takahashi M."/>
            <person name="Takase K."/>
            <person name="Terabayashi Y."/>
            <person name="Wortman J.R."/>
            <person name="Yamada O."/>
            <person name="Yamagata Y."/>
            <person name="Anazawa H."/>
            <person name="Hata Y."/>
            <person name="Koide Y."/>
            <person name="Komori T."/>
            <person name="Koyama Y."/>
            <person name="Minetoki T."/>
            <person name="Suharnan S."/>
            <person name="Tanaka A."/>
            <person name="Isono K."/>
            <person name="Kuhara S."/>
            <person name="Ogasawara N."/>
            <person name="Kikuchi H."/>
        </authorList>
    </citation>
    <scope>NUCLEOTIDE SEQUENCE [LARGE SCALE GENOMIC DNA] (AMY1 AND AMY2)</scope>
    <source>
        <strain>ATCC 42149 / RIB 40</strain>
    </source>
</reference>
<reference key="5">
    <citation type="journal article" date="1982" name="Proc. Jpn. Acad., B, Phys. Biol. Sci.">
        <title>The complete amino acid sequence of Taka-amylase A.</title>
        <authorList>
            <person name="Toda H."/>
            <person name="Kondo K."/>
            <person name="Narita K."/>
        </authorList>
    </citation>
    <scope>PROTEIN SEQUENCE OF 22-499</scope>
</reference>
<reference key="6">
    <citation type="journal article" date="1973" name="J. Biochem.">
        <title>The amino acid sequences of glycopeptides obtained from Taka-amylase A with trypsin and chymotrypsin.</title>
        <authorList>
            <person name="Isemura S."/>
            <person name="Ikenaka T."/>
        </authorList>
    </citation>
    <scope>PROTEIN SEQUENCE OF 206-225</scope>
</reference>
<reference key="7">
    <citation type="journal article" date="1975" name="Proc. Jpn. Acad.">
        <title>Amino acid sequence of the C-terminal sixty-six residues of Taka-amylase A.</title>
        <authorList>
            <person name="Narita K."/>
        </authorList>
    </citation>
    <scope>PROTEIN SEQUENCE OF 434-499</scope>
</reference>
<reference key="8">
    <citation type="journal article" date="1980" name="J. Biochem.">
        <title>Molecular structure of taka-amylase A. I. Backbone chain folding at 3-A resolution.</title>
        <authorList>
            <person name="Matsuura Y."/>
            <person name="Kusunoki M."/>
            <person name="Harada W."/>
            <person name="Tanaka N."/>
            <person name="Iga Y."/>
            <person name="Yasuoka N."/>
            <person name="Toda H."/>
            <person name="Narita K."/>
            <person name="Kakudo M."/>
        </authorList>
    </citation>
    <scope>X-RAY CRYSTALLOGRAPHY (3.00 ANGSTROMS) OF 22-499 IN COMPLEX WITH CALCIUM</scope>
    <scope>COFACTOR</scope>
    <scope>DISULFIDE BONDS</scope>
</reference>
<reference key="9">
    <citation type="journal article" date="1984" name="J. Biochem.">
        <title>Structure and possible catalytic residues of Taka-amylase A.</title>
        <authorList>
            <person name="Matsuura Y."/>
            <person name="Kusunoki M."/>
            <person name="Harada W."/>
            <person name="Kakudo M."/>
        </authorList>
    </citation>
    <scope>X-RAY CRYSTALLOGRAPHY (3 ANGSTROMS)</scope>
</reference>
<reference key="10">
    <citation type="journal article" date="1997" name="Biochemistry">
        <title>Structure of the Aspergillus oryzae alpha-amylase complexed with the inhibitor acarbose at 2.0-A resolution.</title>
        <authorList>
            <person name="Brzozowski A.M."/>
            <person name="Davies G.J."/>
        </authorList>
    </citation>
    <scope>X-RAY CRYSTALLOGRAPHY (1.98 ANGSTROMS) IN COMPLEX WITH CALCIUM AND ACARBOSE</scope>
    <scope>COFACTOR</scope>
    <scope>DISULFIDE BONDS</scope>
    <scope>ACTIVE SITE</scope>
</reference>
<reference key="11">
    <citation type="journal article" date="2006" name="Acta Crystallogr. F">
        <title>Monoclinic crystal form of Aspergillus niger alpha-amylase in complex with maltose at 1.8 angstroms resolution.</title>
        <authorList>
            <person name="Vujicic-Zagar A."/>
            <person name="Dijkstra B.W."/>
        </authorList>
    </citation>
    <scope>X-RAY CRYSTALLOGRAPHY (1.59 ANGSTROMS) OF 22-499 IN COMPLEX WITH MALTOSE AND CALCIUM IONS</scope>
    <scope>GLYCOSYLATION AT ASN-218</scope>
    <scope>DISULFIDE BONDS</scope>
</reference>
<proteinExistence type="evidence at protein level"/>
<name>AMYA1_ASPOR</name>
<gene>
    <name type="primary">amy1</name>
    <name type="synonym">amyI</name>
    <name type="synonym">Taa-G1</name>
    <name type="ORF">AO090023000944</name>
</gene>
<gene>
    <name type="primary">amy2</name>
    <name type="synonym">amyII</name>
    <name type="synonym">Taa-G2</name>
    <name type="ORF">AO090120000196</name>
</gene>
<dbReference type="EC" id="3.2.1.1" evidence="5"/>
<dbReference type="EMBL" id="X12725">
    <property type="protein sequence ID" value="CAA31218.1"/>
    <property type="molecule type" value="Genomic_DNA"/>
</dbReference>
<dbReference type="EMBL" id="X12726">
    <property type="protein sequence ID" value="CAA31219.1"/>
    <property type="molecule type" value="Genomic_DNA"/>
</dbReference>
<dbReference type="EMBL" id="D00434">
    <property type="protein sequence ID" value="BAA00336.1"/>
    <property type="molecule type" value="Genomic_DNA"/>
</dbReference>
<dbReference type="EMBL" id="BA000051">
    <property type="protein sequence ID" value="BAE59434.1"/>
    <property type="molecule type" value="Genomic_DNA"/>
</dbReference>
<dbReference type="EMBL" id="BA000053">
    <property type="protein sequence ID" value="BAE62808.1"/>
    <property type="molecule type" value="Genomic_DNA"/>
</dbReference>
<dbReference type="PIR" id="JK0201">
    <property type="entry name" value="JK0201"/>
</dbReference>
<dbReference type="PIR" id="JT0466">
    <property type="entry name" value="JT0466"/>
</dbReference>
<dbReference type="PIR" id="S04548">
    <property type="entry name" value="ALAS1"/>
</dbReference>
<dbReference type="RefSeq" id="XP_001821436.1">
    <property type="nucleotide sequence ID" value="XM_001821384.2"/>
</dbReference>
<dbReference type="RefSeq" id="XP_001823941.1">
    <property type="nucleotide sequence ID" value="XM_001823889.2"/>
</dbReference>
<dbReference type="PDB" id="2GUY">
    <property type="method" value="X-ray"/>
    <property type="resolution" value="1.59 A"/>
    <property type="chains" value="A=22-499"/>
</dbReference>
<dbReference type="PDB" id="2GVY">
    <property type="method" value="X-ray"/>
    <property type="resolution" value="1.80 A"/>
    <property type="chains" value="A/B=22-499"/>
</dbReference>
<dbReference type="PDB" id="2TAA">
    <property type="method" value="X-ray"/>
    <property type="resolution" value="3.00 A"/>
    <property type="chains" value="A/B/C=22-499"/>
</dbReference>
<dbReference type="PDB" id="3KWX">
    <property type="method" value="X-ray"/>
    <property type="resolution" value="2.40 A"/>
    <property type="chains" value="A=22-499"/>
</dbReference>
<dbReference type="PDB" id="3VX0">
    <property type="method" value="X-ray"/>
    <property type="resolution" value="1.50 A"/>
    <property type="chains" value="A=22-499"/>
</dbReference>
<dbReference type="PDB" id="3VX1">
    <property type="method" value="X-ray"/>
    <property type="resolution" value="2.20 A"/>
    <property type="chains" value="A=22-499"/>
</dbReference>
<dbReference type="PDB" id="6TAA">
    <property type="method" value="X-ray"/>
    <property type="resolution" value="2.10 A"/>
    <property type="chains" value="A=22-499"/>
</dbReference>
<dbReference type="PDB" id="6XSJ">
    <property type="method" value="X-ray"/>
    <property type="resolution" value="1.40 A"/>
    <property type="chains" value="A/B=1-499"/>
</dbReference>
<dbReference type="PDB" id="6XSV">
    <property type="method" value="X-ray"/>
    <property type="resolution" value="1.65 A"/>
    <property type="chains" value="A=1-499"/>
</dbReference>
<dbReference type="PDB" id="6YQ7">
    <property type="method" value="X-ray"/>
    <property type="resolution" value="1.58 A"/>
    <property type="chains" value="A/B=1-499"/>
</dbReference>
<dbReference type="PDB" id="7P4W">
    <property type="method" value="X-ray"/>
    <property type="resolution" value="2.28 A"/>
    <property type="chains" value="A=22-497"/>
</dbReference>
<dbReference type="PDB" id="7TAA">
    <property type="method" value="X-ray"/>
    <property type="resolution" value="1.98 A"/>
    <property type="chains" value="A=22-499"/>
</dbReference>
<dbReference type="PDBsum" id="2GUY"/>
<dbReference type="PDBsum" id="2GVY"/>
<dbReference type="PDBsum" id="2TAA"/>
<dbReference type="PDBsum" id="3KWX"/>
<dbReference type="PDBsum" id="3VX0"/>
<dbReference type="PDBsum" id="3VX1"/>
<dbReference type="PDBsum" id="6TAA"/>
<dbReference type="PDBsum" id="6XSJ"/>
<dbReference type="PDBsum" id="6XSV"/>
<dbReference type="PDBsum" id="6YQ7"/>
<dbReference type="PDBsum" id="7P4W"/>
<dbReference type="PDBsum" id="7TAA"/>
<dbReference type="SMR" id="P0C1B3"/>
<dbReference type="STRING" id="510516.P0C1B3"/>
<dbReference type="Allergome" id="86">
    <property type="allergen name" value="Asp o 21"/>
</dbReference>
<dbReference type="CAZy" id="GH13">
    <property type="family name" value="Glycoside Hydrolase Family 13"/>
</dbReference>
<dbReference type="GlyConnect" id="25">
    <property type="glycosylation" value="1 N-Linked glycan (1 site)"/>
</dbReference>
<dbReference type="GlyCosmos" id="P0C1B3">
    <property type="glycosylation" value="1 site, 1 glycan"/>
</dbReference>
<dbReference type="EnsemblFungi" id="BAE59434">
    <property type="protein sequence ID" value="BAE59434"/>
    <property type="gene ID" value="AO090023000944"/>
</dbReference>
<dbReference type="EnsemblFungi" id="BAE62808">
    <property type="protein sequence ID" value="BAE62808"/>
    <property type="gene ID" value="AO090120000196"/>
</dbReference>
<dbReference type="GeneID" id="5993438"/>
<dbReference type="GeneID" id="5996200"/>
<dbReference type="KEGG" id="aor:AO090023000944"/>
<dbReference type="KEGG" id="aor:AO090120000196"/>
<dbReference type="VEuPathDB" id="FungiDB:AO090023000944"/>
<dbReference type="VEuPathDB" id="FungiDB:AO090120000196"/>
<dbReference type="HOGENOM" id="CLU_006462_7_2_1"/>
<dbReference type="OMA" id="WISPVIK"/>
<dbReference type="OrthoDB" id="48645at5052"/>
<dbReference type="EvolutionaryTrace" id="P0C1B3"/>
<dbReference type="Proteomes" id="UP000006564">
    <property type="component" value="Chromosome 3"/>
</dbReference>
<dbReference type="Proteomes" id="UP000006564">
    <property type="component" value="Chromosome 5"/>
</dbReference>
<dbReference type="GO" id="GO:0030428">
    <property type="term" value="C:cell septum"/>
    <property type="evidence" value="ECO:0000314"/>
    <property type="project" value="AspGD"/>
</dbReference>
<dbReference type="GO" id="GO:0030287">
    <property type="term" value="C:cell wall-bounded periplasmic space"/>
    <property type="evidence" value="ECO:0000314"/>
    <property type="project" value="AspGD"/>
</dbReference>
<dbReference type="GO" id="GO:0005576">
    <property type="term" value="C:extracellular region"/>
    <property type="evidence" value="ECO:0007669"/>
    <property type="project" value="UniProtKB-SubCell"/>
</dbReference>
<dbReference type="GO" id="GO:0009277">
    <property type="term" value="C:fungal-type cell wall"/>
    <property type="evidence" value="ECO:0000314"/>
    <property type="project" value="AspGD"/>
</dbReference>
<dbReference type="GO" id="GO:0032163">
    <property type="term" value="C:hyphal septin band"/>
    <property type="evidence" value="ECO:0000314"/>
    <property type="project" value="AspGD"/>
</dbReference>
<dbReference type="GO" id="GO:0031521">
    <property type="term" value="C:spitzenkorper"/>
    <property type="evidence" value="ECO:0000314"/>
    <property type="project" value="AspGD"/>
</dbReference>
<dbReference type="GO" id="GO:0004556">
    <property type="term" value="F:alpha-amylase activity"/>
    <property type="evidence" value="ECO:0000316"/>
    <property type="project" value="AspGD"/>
</dbReference>
<dbReference type="GO" id="GO:0005509">
    <property type="term" value="F:calcium ion binding"/>
    <property type="evidence" value="ECO:0007669"/>
    <property type="project" value="InterPro"/>
</dbReference>
<dbReference type="GO" id="GO:0016052">
    <property type="term" value="P:carbohydrate catabolic process"/>
    <property type="evidence" value="ECO:0000316"/>
    <property type="project" value="AspGD"/>
</dbReference>
<dbReference type="CDD" id="cd11319">
    <property type="entry name" value="AmyAc_euk_AmyA"/>
    <property type="match status" value="1"/>
</dbReference>
<dbReference type="FunFam" id="2.60.40.1180:FF:000037">
    <property type="entry name" value="Alpha-amylase A"/>
    <property type="match status" value="1"/>
</dbReference>
<dbReference type="FunFam" id="3.20.20.80:FF:000120">
    <property type="entry name" value="Alpha-amylase A"/>
    <property type="match status" value="1"/>
</dbReference>
<dbReference type="Gene3D" id="3.20.20.80">
    <property type="entry name" value="Glycosidases"/>
    <property type="match status" value="1"/>
</dbReference>
<dbReference type="Gene3D" id="2.60.40.1180">
    <property type="entry name" value="Golgi alpha-mannosidase II"/>
    <property type="match status" value="1"/>
</dbReference>
<dbReference type="InterPro" id="IPR013777">
    <property type="entry name" value="A-amylase-like"/>
</dbReference>
<dbReference type="InterPro" id="IPR015340">
    <property type="entry name" value="A_amylase_C_dom"/>
</dbReference>
<dbReference type="InterPro" id="IPR006046">
    <property type="entry name" value="Alpha_amylase"/>
</dbReference>
<dbReference type="InterPro" id="IPR006047">
    <property type="entry name" value="Glyco_hydro_13_cat_dom"/>
</dbReference>
<dbReference type="InterPro" id="IPR013780">
    <property type="entry name" value="Glyco_hydro_b"/>
</dbReference>
<dbReference type="InterPro" id="IPR017853">
    <property type="entry name" value="Glycoside_hydrolase_SF"/>
</dbReference>
<dbReference type="PANTHER" id="PTHR10357:SF215">
    <property type="entry name" value="ALPHA-AMYLASE 1"/>
    <property type="match status" value="1"/>
</dbReference>
<dbReference type="PANTHER" id="PTHR10357">
    <property type="entry name" value="ALPHA-AMYLASE FAMILY MEMBER"/>
    <property type="match status" value="1"/>
</dbReference>
<dbReference type="Pfam" id="PF09260">
    <property type="entry name" value="A_amylase_dom_C"/>
    <property type="match status" value="1"/>
</dbReference>
<dbReference type="Pfam" id="PF00128">
    <property type="entry name" value="Alpha-amylase"/>
    <property type="match status" value="1"/>
</dbReference>
<dbReference type="PIRSF" id="PIRSF001024">
    <property type="entry name" value="Alph-amyl_fung"/>
    <property type="match status" value="1"/>
</dbReference>
<dbReference type="PRINTS" id="PR00110">
    <property type="entry name" value="ALPHAAMYLASE"/>
</dbReference>
<dbReference type="SMART" id="SM00642">
    <property type="entry name" value="Aamy"/>
    <property type="match status" value="1"/>
</dbReference>
<dbReference type="SUPFAM" id="SSF51445">
    <property type="entry name" value="(Trans)glycosidases"/>
    <property type="match status" value="1"/>
</dbReference>
<dbReference type="SUPFAM" id="SSF51011">
    <property type="entry name" value="Glycosyl hydrolase domain"/>
    <property type="match status" value="1"/>
</dbReference>
<keyword id="KW-0002">3D-structure</keyword>
<keyword id="KW-0106">Calcium</keyword>
<keyword id="KW-0119">Carbohydrate metabolism</keyword>
<keyword id="KW-0903">Direct protein sequencing</keyword>
<keyword id="KW-1015">Disulfide bond</keyword>
<keyword id="KW-0325">Glycoprotein</keyword>
<keyword id="KW-0326">Glycosidase</keyword>
<keyword id="KW-0378">Hydrolase</keyword>
<keyword id="KW-0479">Metal-binding</keyword>
<keyword id="KW-1185">Reference proteome</keyword>
<keyword id="KW-0964">Secreted</keyword>
<keyword id="KW-0732">Signal</keyword>
<accession>P0C1B3</accession>
<accession>P10529</accession>
<accession>P11763</accession>
<accession>Q00250</accession>
<accession>Q2U6K7</accession>
<sequence>MMVAWWSLFLYGLQVAAPALAATPADWRSQSIYFLLTDRFARTDGSTTATCNTADQKYCGGTWQGIIDKLDYIQGMGFTAIWITPVTAQLPQTTAYGDAYHGYWQQDIYSLNENYGTADDLKALSSALHERGMYLMVDVVANHMGYDGAGSSVDYSVFKPFSSQDYFHPFCFIQNYEDQTQVEDCWLGDNTVSLPDLDTTKDVVKNEWYDWVGSLVSNYSIDGLRIDTVKHVQKDFWPGYNKAAGVYCIGEVLDGDPAYTCPYQNVMDGVLNYPIYYPLLNAFKSTSGSMDDLYNMINTVKSDCPDSTLLGTFVENHDNPRFASYTNDIALAKNVAAFIILNDGIPIIYAGQEQHYAGGNDPANREATWLSGYPTDSELYKLIASANAIRNYAISKDTGFVTYKNWPIYKDDTTIAMRKGTDGSQIVTILSNKGASGDSYTLSLSGAGYTAGQQLTEVIGCTTVTVGSDGNVPVPMAGGLPRVLYPTEKLAGSKICSSS</sequence>
<protein>
    <recommendedName>
        <fullName>Alpha-amylase A type-1/2</fullName>
        <ecNumber evidence="5">3.2.1.1</ecNumber>
    </recommendedName>
    <alternativeName>
        <fullName>1,4-alpha-D-glucan glucanohydrolase</fullName>
    </alternativeName>
    <alternativeName>
        <fullName>Taka-amylase A</fullName>
        <shortName>TAA</shortName>
    </alternativeName>
</protein>
<comment type="catalytic activity">
    <reaction evidence="5">
        <text>Endohydrolysis of (1-&gt;4)-alpha-D-glucosidic linkages in polysaccharides containing three or more (1-&gt;4)-alpha-linked D-glucose units.</text>
        <dbReference type="EC" id="3.2.1.1"/>
    </reaction>
</comment>
<comment type="cofactor">
    <cofactor evidence="1 2 3">
        <name>Ca(2+)</name>
        <dbReference type="ChEBI" id="CHEBI:29108"/>
    </cofactor>
    <text evidence="1 2 3 5">Binds 2 calcium ions per subunit (PubMed:16880540, PubMed:6609921, PubMed:9283074). Calcium is inhibitory at high concentrations.</text>
</comment>
<comment type="subunit">
    <text evidence="1 3">Monomer.</text>
</comment>
<comment type="subcellular location">
    <subcellularLocation>
        <location evidence="5">Secreted</location>
    </subcellularLocation>
</comment>
<comment type="biotechnology">
    <text>Used in the brewing industry to increase the fermentability of beer worts (including those made from unmalted cereals), in the starch industry to make high maltose and high DE syrups (starch saccharification), in the alcohol industry to reduce fermentation time, in the cereal food industry for flour supplementation and improvement of chilled and frozen dough, and in the forestry industry for low-temperature modification of starch. Sold under the name Fungamyl by Novozymes.</text>
</comment>
<comment type="similarity">
    <text evidence="5">Belongs to the glycosyl hydrolase 13 family.</text>
</comment>
<organism>
    <name type="scientific">Aspergillus oryzae (strain ATCC 42149 / RIB 40)</name>
    <name type="common">Yellow koji mold</name>
    <dbReference type="NCBI Taxonomy" id="510516"/>
    <lineage>
        <taxon>Eukaryota</taxon>
        <taxon>Fungi</taxon>
        <taxon>Dikarya</taxon>
        <taxon>Ascomycota</taxon>
        <taxon>Pezizomycotina</taxon>
        <taxon>Eurotiomycetes</taxon>
        <taxon>Eurotiomycetidae</taxon>
        <taxon>Eurotiales</taxon>
        <taxon>Aspergillaceae</taxon>
        <taxon>Aspergillus</taxon>
        <taxon>Aspergillus subgen. Circumdati</taxon>
    </lineage>
</organism>